<accession>B2V9P9</accession>
<dbReference type="EC" id="6.1.1.14" evidence="1"/>
<dbReference type="EMBL" id="CP001080">
    <property type="protein sequence ID" value="ACD66672.1"/>
    <property type="molecule type" value="Genomic_DNA"/>
</dbReference>
<dbReference type="RefSeq" id="WP_012459740.1">
    <property type="nucleotide sequence ID" value="NC_010730.1"/>
</dbReference>
<dbReference type="SMR" id="B2V9P9"/>
<dbReference type="STRING" id="436114.SYO3AOP1_1053"/>
<dbReference type="KEGG" id="sul:SYO3AOP1_1053"/>
<dbReference type="eggNOG" id="COG0751">
    <property type="taxonomic scope" value="Bacteria"/>
</dbReference>
<dbReference type="HOGENOM" id="CLU_007220_2_2_0"/>
<dbReference type="GO" id="GO:0005829">
    <property type="term" value="C:cytosol"/>
    <property type="evidence" value="ECO:0007669"/>
    <property type="project" value="TreeGrafter"/>
</dbReference>
<dbReference type="GO" id="GO:0004814">
    <property type="term" value="F:arginine-tRNA ligase activity"/>
    <property type="evidence" value="ECO:0007669"/>
    <property type="project" value="InterPro"/>
</dbReference>
<dbReference type="GO" id="GO:0005524">
    <property type="term" value="F:ATP binding"/>
    <property type="evidence" value="ECO:0007669"/>
    <property type="project" value="UniProtKB-UniRule"/>
</dbReference>
<dbReference type="GO" id="GO:0004820">
    <property type="term" value="F:glycine-tRNA ligase activity"/>
    <property type="evidence" value="ECO:0007669"/>
    <property type="project" value="UniProtKB-UniRule"/>
</dbReference>
<dbReference type="GO" id="GO:0006420">
    <property type="term" value="P:arginyl-tRNA aminoacylation"/>
    <property type="evidence" value="ECO:0007669"/>
    <property type="project" value="InterPro"/>
</dbReference>
<dbReference type="GO" id="GO:0006426">
    <property type="term" value="P:glycyl-tRNA aminoacylation"/>
    <property type="evidence" value="ECO:0007669"/>
    <property type="project" value="UniProtKB-UniRule"/>
</dbReference>
<dbReference type="HAMAP" id="MF_00255">
    <property type="entry name" value="Gly_tRNA_synth_beta"/>
    <property type="match status" value="1"/>
</dbReference>
<dbReference type="InterPro" id="IPR008909">
    <property type="entry name" value="DALR_anticod-bd"/>
</dbReference>
<dbReference type="InterPro" id="IPR015944">
    <property type="entry name" value="Gly-tRNA-synth_bsu"/>
</dbReference>
<dbReference type="InterPro" id="IPR006194">
    <property type="entry name" value="Gly-tRNA-synth_heterodimer"/>
</dbReference>
<dbReference type="NCBIfam" id="TIGR00211">
    <property type="entry name" value="glyS"/>
    <property type="match status" value="1"/>
</dbReference>
<dbReference type="PANTHER" id="PTHR30075:SF2">
    <property type="entry name" value="GLYCINE--TRNA LIGASE, CHLOROPLASTIC_MITOCHONDRIAL 2"/>
    <property type="match status" value="1"/>
</dbReference>
<dbReference type="PANTHER" id="PTHR30075">
    <property type="entry name" value="GLYCYL-TRNA SYNTHETASE"/>
    <property type="match status" value="1"/>
</dbReference>
<dbReference type="Pfam" id="PF05746">
    <property type="entry name" value="DALR_1"/>
    <property type="match status" value="1"/>
</dbReference>
<dbReference type="Pfam" id="PF02092">
    <property type="entry name" value="tRNA_synt_2f"/>
    <property type="match status" value="1"/>
</dbReference>
<dbReference type="PRINTS" id="PR01045">
    <property type="entry name" value="TRNASYNTHGB"/>
</dbReference>
<dbReference type="SUPFAM" id="SSF109604">
    <property type="entry name" value="HD-domain/PDEase-like"/>
    <property type="match status" value="1"/>
</dbReference>
<dbReference type="PROSITE" id="PS50861">
    <property type="entry name" value="AA_TRNA_LIGASE_II_GLYAB"/>
    <property type="match status" value="1"/>
</dbReference>
<proteinExistence type="inferred from homology"/>
<protein>
    <recommendedName>
        <fullName evidence="1">Glycine--tRNA ligase beta subunit</fullName>
        <ecNumber evidence="1">6.1.1.14</ecNumber>
    </recommendedName>
    <alternativeName>
        <fullName evidence="1">Glycyl-tRNA synthetase beta subunit</fullName>
        <shortName evidence="1">GlyRS</shortName>
    </alternativeName>
</protein>
<feature type="chain" id="PRO_1000101362" description="Glycine--tRNA ligase beta subunit">
    <location>
        <begin position="1"/>
        <end position="678"/>
    </location>
</feature>
<sequence length="678" mass="78884">MKSYLLEIGCEELPPKAILTYKEFLKEYAHQTFKDFFIYNSPENIKIYATPRRLAVLIKNLKKKQDNQKITLIGPPYKVAVDSEGKFTKAALSFAEKNNIPLEKLEKITTEKGEYLGATIEKEGESLELFIKHKIPQLFNQFPQLKSMKWNNSDYRFPRPIRWIVSLLDDKVIEFEVASVKTDRFTHLHRFMTKPIGRGERKDINHANDYEEITKLGYIIANFEDRKHSIKTQYEGFARQLNASIIEDDELIDEITCLTEFPVGIVGDFSPEYLTLPKEVIITVCKHHQRYLNFEKDGKLIPKFLAFSNNAVKDRDIVKNGYEKVLRARLEDALFFYKEDLKKKLDDNIEKLKGIQFHEKLGSMYDKVLRNLELALKLADLTGYKDAEKIKRAVMLSKADLLTEMVKEFDELQGIMGMYYSQKQGEEEEISKSIYEHYLPKTAEDNIPETNLGTLLALADKLDTVISFIKIGELPKPSADPFGIRRNAIGIVRLLVEKEIDLDLRKVIDDESILDFILSRLESYLQSKGYKTDIINAVLSLKDGNIYRNYLKVKALSQLRNLPDYENVIMVFKRVGNIIPEDFKFSNVDVNLLVSQPEKELYKKFIEIKDKFKRFIENKDYDKALGLLLELKPYIDRFFDNVMIMVEDEKLKNNRLSLLKEINDLFRNIADFTKLIGG</sequence>
<keyword id="KW-0030">Aminoacyl-tRNA synthetase</keyword>
<keyword id="KW-0067">ATP-binding</keyword>
<keyword id="KW-0963">Cytoplasm</keyword>
<keyword id="KW-0436">Ligase</keyword>
<keyword id="KW-0547">Nucleotide-binding</keyword>
<keyword id="KW-0648">Protein biosynthesis</keyword>
<gene>
    <name evidence="1" type="primary">glyS</name>
    <name type="ordered locus">SYO3AOP1_1053</name>
</gene>
<reference key="1">
    <citation type="journal article" date="2009" name="J. Bacteriol.">
        <title>Complete and draft genome sequences of six members of the Aquificales.</title>
        <authorList>
            <person name="Reysenbach A.-L."/>
            <person name="Hamamura N."/>
            <person name="Podar M."/>
            <person name="Griffiths E."/>
            <person name="Ferreira S."/>
            <person name="Hochstein R."/>
            <person name="Heidelberg J."/>
            <person name="Johnson J."/>
            <person name="Mead D."/>
            <person name="Pohorille A."/>
            <person name="Sarmiento M."/>
            <person name="Schweighofer K."/>
            <person name="Seshadri R."/>
            <person name="Voytek M.A."/>
        </authorList>
    </citation>
    <scope>NUCLEOTIDE SEQUENCE [LARGE SCALE GENOMIC DNA]</scope>
    <source>
        <strain>YO3AOP1</strain>
    </source>
</reference>
<name>SYGB_SULSY</name>
<evidence type="ECO:0000255" key="1">
    <source>
        <dbReference type="HAMAP-Rule" id="MF_00255"/>
    </source>
</evidence>
<comment type="catalytic activity">
    <reaction evidence="1">
        <text>tRNA(Gly) + glycine + ATP = glycyl-tRNA(Gly) + AMP + diphosphate</text>
        <dbReference type="Rhea" id="RHEA:16013"/>
        <dbReference type="Rhea" id="RHEA-COMP:9664"/>
        <dbReference type="Rhea" id="RHEA-COMP:9683"/>
        <dbReference type="ChEBI" id="CHEBI:30616"/>
        <dbReference type="ChEBI" id="CHEBI:33019"/>
        <dbReference type="ChEBI" id="CHEBI:57305"/>
        <dbReference type="ChEBI" id="CHEBI:78442"/>
        <dbReference type="ChEBI" id="CHEBI:78522"/>
        <dbReference type="ChEBI" id="CHEBI:456215"/>
        <dbReference type="EC" id="6.1.1.14"/>
    </reaction>
</comment>
<comment type="subunit">
    <text evidence="1">Tetramer of two alpha and two beta subunits.</text>
</comment>
<comment type="subcellular location">
    <subcellularLocation>
        <location evidence="1">Cytoplasm</location>
    </subcellularLocation>
</comment>
<comment type="similarity">
    <text evidence="1">Belongs to the class-II aminoacyl-tRNA synthetase family.</text>
</comment>
<organism>
    <name type="scientific">Sulfurihydrogenibium sp. (strain YO3AOP1)</name>
    <dbReference type="NCBI Taxonomy" id="436114"/>
    <lineage>
        <taxon>Bacteria</taxon>
        <taxon>Pseudomonadati</taxon>
        <taxon>Aquificota</taxon>
        <taxon>Aquificia</taxon>
        <taxon>Aquificales</taxon>
        <taxon>Hydrogenothermaceae</taxon>
        <taxon>Sulfurihydrogenibium</taxon>
    </lineage>
</organism>